<keyword id="KW-0025">Alternative splicing</keyword>
<keyword id="KW-0040">ANK repeat</keyword>
<keyword id="KW-0175">Coiled coil</keyword>
<keyword id="KW-0963">Cytoplasm</keyword>
<keyword id="KW-0206">Cytoskeleton</keyword>
<keyword id="KW-1017">Isopeptide bond</keyword>
<keyword id="KW-0539">Nucleus</keyword>
<keyword id="KW-1185">Reference proteome</keyword>
<keyword id="KW-0677">Repeat</keyword>
<keyword id="KW-0832">Ubl conjugation</keyword>
<proteinExistence type="evidence at transcript level"/>
<evidence type="ECO:0000250" key="1"/>
<evidence type="ECO:0000250" key="2">
    <source>
        <dbReference type="UniProtKB" id="Q8CGB3"/>
    </source>
</evidence>
<evidence type="ECO:0000250" key="3">
    <source>
        <dbReference type="UniProtKB" id="Q8HYY4"/>
    </source>
</evidence>
<evidence type="ECO:0000250" key="4">
    <source>
        <dbReference type="UniProtKB" id="Q9BZF9"/>
    </source>
</evidence>
<evidence type="ECO:0000255" key="5"/>
<evidence type="ECO:0000256" key="6">
    <source>
        <dbReference type="SAM" id="MobiDB-lite"/>
    </source>
</evidence>
<evidence type="ECO:0000269" key="7">
    <source>
    </source>
</evidence>
<evidence type="ECO:0000303" key="8">
    <source>
    </source>
</evidence>
<feature type="chain" id="PRO_0000231649" description="Uveal autoantigen with coiled-coil domains and ankyrin repeats">
    <location>
        <begin position="1"/>
        <end position="1415"/>
    </location>
</feature>
<feature type="repeat" description="ANK 1">
    <location>
        <begin position="69"/>
        <end position="98"/>
    </location>
</feature>
<feature type="repeat" description="ANK 2">
    <location>
        <begin position="102"/>
        <end position="131"/>
    </location>
</feature>
<feature type="repeat" description="ANK 3">
    <location>
        <begin position="135"/>
        <end position="164"/>
    </location>
</feature>
<feature type="repeat" description="ANK 4">
    <location>
        <begin position="168"/>
        <end position="197"/>
    </location>
</feature>
<feature type="repeat" description="ANK 5">
    <location>
        <begin position="201"/>
        <end position="230"/>
    </location>
</feature>
<feature type="repeat" description="ANK 6">
    <location>
        <begin position="617"/>
        <end position="646"/>
    </location>
</feature>
<feature type="region of interest" description="Disordered" evidence="6">
    <location>
        <begin position="1186"/>
        <end position="1205"/>
    </location>
</feature>
<feature type="coiled-coil region" evidence="5">
    <location>
        <begin position="288"/>
        <end position="376"/>
    </location>
</feature>
<feature type="coiled-coil region" evidence="5">
    <location>
        <begin position="759"/>
        <end position="1381"/>
    </location>
</feature>
<feature type="compositionally biased region" description="Basic and acidic residues" evidence="6">
    <location>
        <begin position="1186"/>
        <end position="1201"/>
    </location>
</feature>
<feature type="cross-link" description="Glycyl lysine isopeptide (Lys-Gly) (interchain with G-Cter in SUMO2)" evidence="4">
    <location>
        <position position="1034"/>
    </location>
</feature>
<feature type="splice variant" id="VSP_017873" description="In isoform 2." evidence="8">
    <location>
        <begin position="380"/>
        <end position="406"/>
    </location>
</feature>
<reference key="1">
    <citation type="journal article" date="1996" name="J. Biol. Chem.">
        <title>Identification and characterization of novel genes modulated in the thyroid of dogs treated with methimazole and propylthiouracil.</title>
        <authorList>
            <person name="Wilkin F."/>
            <person name="Savonet V."/>
            <person name="Radulescu A."/>
            <person name="Petermans J."/>
            <person name="Dumont J.E."/>
            <person name="Maenhaut C."/>
        </authorList>
    </citation>
    <scope>NUCLEOTIDE SEQUENCE [MRNA] (ISOFORM 2)</scope>
    <scope>TISSUE SPECIFICITY</scope>
    <scope>INDUCTION</scope>
    <source>
        <tissue>Thyroid</tissue>
    </source>
</reference>
<reference key="2">
    <citation type="journal article" date="2005" name="Nature">
        <title>Genome sequence, comparative analysis and haplotype structure of the domestic dog.</title>
        <authorList>
            <person name="Lindblad-Toh K."/>
            <person name="Wade C.M."/>
            <person name="Mikkelsen T.S."/>
            <person name="Karlsson E.K."/>
            <person name="Jaffe D.B."/>
            <person name="Kamal M."/>
            <person name="Clamp M."/>
            <person name="Chang J.L."/>
            <person name="Kulbokas E.J. III"/>
            <person name="Zody M.C."/>
            <person name="Mauceli E."/>
            <person name="Xie X."/>
            <person name="Breen M."/>
            <person name="Wayne R.K."/>
            <person name="Ostrander E.A."/>
            <person name="Ponting C.P."/>
            <person name="Galibert F."/>
            <person name="Smith D.R."/>
            <person name="deJong P.J."/>
            <person name="Kirkness E.F."/>
            <person name="Alvarez P."/>
            <person name="Biagi T."/>
            <person name="Brockman W."/>
            <person name="Butler J."/>
            <person name="Chin C.-W."/>
            <person name="Cook A."/>
            <person name="Cuff J."/>
            <person name="Daly M.J."/>
            <person name="DeCaprio D."/>
            <person name="Gnerre S."/>
            <person name="Grabherr M."/>
            <person name="Kellis M."/>
            <person name="Kleber M."/>
            <person name="Bardeleben C."/>
            <person name="Goodstadt L."/>
            <person name="Heger A."/>
            <person name="Hitte C."/>
            <person name="Kim L."/>
            <person name="Koepfli K.-P."/>
            <person name="Parker H.G."/>
            <person name="Pollinger J.P."/>
            <person name="Searle S.M.J."/>
            <person name="Sutter N.B."/>
            <person name="Thomas R."/>
            <person name="Webber C."/>
            <person name="Baldwin J."/>
            <person name="Abebe A."/>
            <person name="Abouelleil A."/>
            <person name="Aftuck L."/>
            <person name="Ait-Zahra M."/>
            <person name="Aldredge T."/>
            <person name="Allen N."/>
            <person name="An P."/>
            <person name="Anderson S."/>
            <person name="Antoine C."/>
            <person name="Arachchi H."/>
            <person name="Aslam A."/>
            <person name="Ayotte L."/>
            <person name="Bachantsang P."/>
            <person name="Barry A."/>
            <person name="Bayul T."/>
            <person name="Benamara M."/>
            <person name="Berlin A."/>
            <person name="Bessette D."/>
            <person name="Blitshteyn B."/>
            <person name="Bloom T."/>
            <person name="Blye J."/>
            <person name="Boguslavskiy L."/>
            <person name="Bonnet C."/>
            <person name="Boukhgalter B."/>
            <person name="Brown A."/>
            <person name="Cahill P."/>
            <person name="Calixte N."/>
            <person name="Camarata J."/>
            <person name="Cheshatsang Y."/>
            <person name="Chu J."/>
            <person name="Citroen M."/>
            <person name="Collymore A."/>
            <person name="Cooke P."/>
            <person name="Dawoe T."/>
            <person name="Daza R."/>
            <person name="Decktor K."/>
            <person name="DeGray S."/>
            <person name="Dhargay N."/>
            <person name="Dooley K."/>
            <person name="Dooley K."/>
            <person name="Dorje P."/>
            <person name="Dorjee K."/>
            <person name="Dorris L."/>
            <person name="Duffey N."/>
            <person name="Dupes A."/>
            <person name="Egbiremolen O."/>
            <person name="Elong R."/>
            <person name="Falk J."/>
            <person name="Farina A."/>
            <person name="Faro S."/>
            <person name="Ferguson D."/>
            <person name="Ferreira P."/>
            <person name="Fisher S."/>
            <person name="FitzGerald M."/>
            <person name="Foley K."/>
            <person name="Foley C."/>
            <person name="Franke A."/>
            <person name="Friedrich D."/>
            <person name="Gage D."/>
            <person name="Garber M."/>
            <person name="Gearin G."/>
            <person name="Giannoukos G."/>
            <person name="Goode T."/>
            <person name="Goyette A."/>
            <person name="Graham J."/>
            <person name="Grandbois E."/>
            <person name="Gyaltsen K."/>
            <person name="Hafez N."/>
            <person name="Hagopian D."/>
            <person name="Hagos B."/>
            <person name="Hall J."/>
            <person name="Healy C."/>
            <person name="Hegarty R."/>
            <person name="Honan T."/>
            <person name="Horn A."/>
            <person name="Houde N."/>
            <person name="Hughes L."/>
            <person name="Hunnicutt L."/>
            <person name="Husby M."/>
            <person name="Jester B."/>
            <person name="Jones C."/>
            <person name="Kamat A."/>
            <person name="Kanga B."/>
            <person name="Kells C."/>
            <person name="Khazanovich D."/>
            <person name="Kieu A.C."/>
            <person name="Kisner P."/>
            <person name="Kumar M."/>
            <person name="Lance K."/>
            <person name="Landers T."/>
            <person name="Lara M."/>
            <person name="Lee W."/>
            <person name="Leger J.-P."/>
            <person name="Lennon N."/>
            <person name="Leuper L."/>
            <person name="LeVine S."/>
            <person name="Liu J."/>
            <person name="Liu X."/>
            <person name="Lokyitsang Y."/>
            <person name="Lokyitsang T."/>
            <person name="Lui A."/>
            <person name="Macdonald J."/>
            <person name="Major J."/>
            <person name="Marabella R."/>
            <person name="Maru K."/>
            <person name="Matthews C."/>
            <person name="McDonough S."/>
            <person name="Mehta T."/>
            <person name="Meldrim J."/>
            <person name="Melnikov A."/>
            <person name="Meneus L."/>
            <person name="Mihalev A."/>
            <person name="Mihova T."/>
            <person name="Miller K."/>
            <person name="Mittelman R."/>
            <person name="Mlenga V."/>
            <person name="Mulrain L."/>
            <person name="Munson G."/>
            <person name="Navidi A."/>
            <person name="Naylor J."/>
            <person name="Nguyen T."/>
            <person name="Nguyen N."/>
            <person name="Nguyen C."/>
            <person name="Nguyen T."/>
            <person name="Nicol R."/>
            <person name="Norbu N."/>
            <person name="Norbu C."/>
            <person name="Novod N."/>
            <person name="Nyima T."/>
            <person name="Olandt P."/>
            <person name="O'Neill B."/>
            <person name="O'Neill K."/>
            <person name="Osman S."/>
            <person name="Oyono L."/>
            <person name="Patti C."/>
            <person name="Perrin D."/>
            <person name="Phunkhang P."/>
            <person name="Pierre F."/>
            <person name="Priest M."/>
            <person name="Rachupka A."/>
            <person name="Raghuraman S."/>
            <person name="Rameau R."/>
            <person name="Ray V."/>
            <person name="Raymond C."/>
            <person name="Rege F."/>
            <person name="Rise C."/>
            <person name="Rogers J."/>
            <person name="Rogov P."/>
            <person name="Sahalie J."/>
            <person name="Settipalli S."/>
            <person name="Sharpe T."/>
            <person name="Shea T."/>
            <person name="Sheehan M."/>
            <person name="Sherpa N."/>
            <person name="Shi J."/>
            <person name="Shih D."/>
            <person name="Sloan J."/>
            <person name="Smith C."/>
            <person name="Sparrow T."/>
            <person name="Stalker J."/>
            <person name="Stange-Thomann N."/>
            <person name="Stavropoulos S."/>
            <person name="Stone C."/>
            <person name="Stone S."/>
            <person name="Sykes S."/>
            <person name="Tchuinga P."/>
            <person name="Tenzing P."/>
            <person name="Tesfaye S."/>
            <person name="Thoulutsang D."/>
            <person name="Thoulutsang Y."/>
            <person name="Topham K."/>
            <person name="Topping I."/>
            <person name="Tsamla T."/>
            <person name="Vassiliev H."/>
            <person name="Venkataraman V."/>
            <person name="Vo A."/>
            <person name="Wangchuk T."/>
            <person name="Wangdi T."/>
            <person name="Weiand M."/>
            <person name="Wilkinson J."/>
            <person name="Wilson A."/>
            <person name="Yadav S."/>
            <person name="Yang S."/>
            <person name="Yang X."/>
            <person name="Young G."/>
            <person name="Yu Q."/>
            <person name="Zainoun J."/>
            <person name="Zembek L."/>
            <person name="Zimmer A."/>
            <person name="Lander E.S."/>
        </authorList>
    </citation>
    <scope>NUCLEOTIDE SEQUENCE [LARGE SCALE GENOMIC DNA]</scope>
    <source>
        <strain>Boxer</strain>
    </source>
</reference>
<accession>Q9GL21</accession>
<gene>
    <name type="primary">UACA</name>
    <name type="ORF">C3VS</name>
</gene>
<protein>
    <recommendedName>
        <fullName>Uveal autoantigen with coiled-coil domains and ankyrin repeats</fullName>
    </recommendedName>
</protein>
<organism>
    <name type="scientific">Canis lupus familiaris</name>
    <name type="common">Dog</name>
    <name type="synonym">Canis familiaris</name>
    <dbReference type="NCBI Taxonomy" id="9615"/>
    <lineage>
        <taxon>Eukaryota</taxon>
        <taxon>Metazoa</taxon>
        <taxon>Chordata</taxon>
        <taxon>Craniata</taxon>
        <taxon>Vertebrata</taxon>
        <taxon>Euteleostomi</taxon>
        <taxon>Mammalia</taxon>
        <taxon>Eutheria</taxon>
        <taxon>Laurasiatheria</taxon>
        <taxon>Carnivora</taxon>
        <taxon>Caniformia</taxon>
        <taxon>Canidae</taxon>
        <taxon>Canis</taxon>
    </lineage>
</organism>
<name>UACA_CANLF</name>
<comment type="function">
    <text evidence="1">Regulates APAF1 expression and plays an important role in the regulation of stress-induced apoptosis. Promotes apoptosis by regulating three pathways, apoptosome up-regulation, LGALS3/galectin-3 down-regulation and NF-kappa-B inactivation. Regulates the redistribution of APAF1 into the nucleus after proapoptotic stress. Down-regulates the expression of LGALS3 by inhibiting NFKB1 (By similarity).</text>
</comment>
<comment type="function">
    <text evidence="2 3">Modulates isoactin dynamics to regulate the morphological alterations required for cell growth and motility. Interaction with ARF6 may modulate cell shape and motility after injury. May be involved in multiple neurite formation (By similarity).</text>
</comment>
<comment type="subunit">
    <text evidence="2 3">Component of the apoptosome complex, composed of APAF1, pro-caspase-9 and UACA. In the complex, it probably interacts directly with APAF1. Interacts with LGALS3, ARF6 and ACTB. Interacts with RAB39A (By similarity).</text>
</comment>
<comment type="subcellular location">
    <subcellularLocation>
        <location evidence="1">Nucleus</location>
    </subcellularLocation>
    <subcellularLocation>
        <location evidence="1">Cytoplasm</location>
    </subcellularLocation>
    <subcellularLocation>
        <location evidence="1">Cytoplasm</location>
        <location evidence="1">Cytoskeleton</location>
    </subcellularLocation>
    <text evidence="1">Expressed diffusely in cytoplasm.</text>
</comment>
<comment type="alternative products">
    <event type="alternative splicing"/>
    <isoform>
        <id>Q9GL21-1</id>
        <name>1</name>
        <sequence type="displayed"/>
    </isoform>
    <isoform>
        <id>Q9GL21-2</id>
        <name>2</name>
        <sequence type="described" ref="VSP_017873"/>
    </isoform>
</comment>
<comment type="tissue specificity">
    <text evidence="7">Highly expressed in adrenal, testis, kidney and large intestine.</text>
</comment>
<comment type="induction">
    <text evidence="7">Up-regulated in stimulated thyroids. Down-regulated by forskolin and TSH. Up-regulated by EGF.</text>
</comment>
<dbReference type="EMBL" id="X99145">
    <property type="protein sequence ID" value="CAC14169.1"/>
    <property type="molecule type" value="mRNA"/>
</dbReference>
<dbReference type="EMBL" id="AAEX02018681">
    <property type="status" value="NOT_ANNOTATED_CDS"/>
    <property type="molecule type" value="Genomic_DNA"/>
</dbReference>
<dbReference type="EMBL" id="AAEX02018682">
    <property type="status" value="NOT_ANNOTATED_CDS"/>
    <property type="molecule type" value="Genomic_DNA"/>
</dbReference>
<dbReference type="EMBL" id="AAEX02018683">
    <property type="status" value="NOT_ANNOTATED_CDS"/>
    <property type="molecule type" value="Genomic_DNA"/>
</dbReference>
<dbReference type="RefSeq" id="NP_001003112.1">
    <molecule id="Q9GL21-2"/>
    <property type="nucleotide sequence ID" value="NM_001003112.1"/>
</dbReference>
<dbReference type="SMR" id="Q9GL21"/>
<dbReference type="BioGRID" id="139628">
    <property type="interactions" value="1"/>
</dbReference>
<dbReference type="FunCoup" id="Q9GL21">
    <property type="interactions" value="4"/>
</dbReference>
<dbReference type="STRING" id="9615.ENSCAFP00000034132"/>
<dbReference type="PaxDb" id="9612-ENSCAFP00000034132"/>
<dbReference type="Ensembl" id="ENSCAFT00000027926.5">
    <molecule id="Q9GL21-2"/>
    <property type="protein sequence ID" value="ENSCAFP00000025969.3"/>
    <property type="gene ID" value="ENSCAFG00000017611.6"/>
</dbReference>
<dbReference type="Ensembl" id="ENSCAFT00845039181.1">
    <molecule id="Q9GL21-2"/>
    <property type="protein sequence ID" value="ENSCAFP00845030687.1"/>
    <property type="gene ID" value="ENSCAFG00845022131.1"/>
</dbReference>
<dbReference type="GeneID" id="403704"/>
<dbReference type="KEGG" id="cfa:403704"/>
<dbReference type="CTD" id="55075"/>
<dbReference type="eggNOG" id="ENOG502QPYN">
    <property type="taxonomic scope" value="Eukaryota"/>
</dbReference>
<dbReference type="GeneTree" id="ENSGT00940000157475"/>
<dbReference type="InParanoid" id="Q9GL21"/>
<dbReference type="OrthoDB" id="341259at2759"/>
<dbReference type="Reactome" id="R-CFA-9013407">
    <property type="pathway name" value="RHOH GTPase cycle"/>
</dbReference>
<dbReference type="Proteomes" id="UP000002254">
    <property type="component" value="Chromosome 30"/>
</dbReference>
<dbReference type="Proteomes" id="UP000694429">
    <property type="component" value="Unplaced"/>
</dbReference>
<dbReference type="Proteomes" id="UP000694542">
    <property type="component" value="Unplaced"/>
</dbReference>
<dbReference type="Proteomes" id="UP000805418">
    <property type="component" value="Chromosome 30"/>
</dbReference>
<dbReference type="Bgee" id="ENSCAFG00000017611">
    <property type="expression patterns" value="Expressed in adrenal cortex and 45 other cell types or tissues"/>
</dbReference>
<dbReference type="GO" id="GO:0005856">
    <property type="term" value="C:cytoskeleton"/>
    <property type="evidence" value="ECO:0007669"/>
    <property type="project" value="UniProtKB-SubCell"/>
</dbReference>
<dbReference type="GO" id="GO:0005829">
    <property type="term" value="C:cytosol"/>
    <property type="evidence" value="ECO:0000318"/>
    <property type="project" value="GO_Central"/>
</dbReference>
<dbReference type="GO" id="GO:0005634">
    <property type="term" value="C:nucleus"/>
    <property type="evidence" value="ECO:0000318"/>
    <property type="project" value="GO_Central"/>
</dbReference>
<dbReference type="GO" id="GO:0003779">
    <property type="term" value="F:actin binding"/>
    <property type="evidence" value="ECO:0007669"/>
    <property type="project" value="InterPro"/>
</dbReference>
<dbReference type="GO" id="GO:0008630">
    <property type="term" value="P:intrinsic apoptotic signaling pathway in response to DNA damage"/>
    <property type="evidence" value="ECO:0000318"/>
    <property type="project" value="GO_Central"/>
</dbReference>
<dbReference type="GO" id="GO:0008631">
    <property type="term" value="P:intrinsic apoptotic signaling pathway in response to oxidative stress"/>
    <property type="evidence" value="ECO:0000318"/>
    <property type="project" value="GO_Central"/>
</dbReference>
<dbReference type="GO" id="GO:0050728">
    <property type="term" value="P:negative regulation of inflammatory response"/>
    <property type="evidence" value="ECO:0000318"/>
    <property type="project" value="GO_Central"/>
</dbReference>
<dbReference type="GO" id="GO:1901223">
    <property type="term" value="P:negative regulation of non-canonical NF-kappaB signal transduction"/>
    <property type="evidence" value="ECO:0000318"/>
    <property type="project" value="GO_Central"/>
</dbReference>
<dbReference type="FunFam" id="1.25.40.20:FF:000083">
    <property type="entry name" value="Uveal autoantigen with coiled-coil domains and ankyrin repeats"/>
    <property type="match status" value="1"/>
</dbReference>
<dbReference type="FunFam" id="1.25.40.20:FF:000287">
    <property type="entry name" value="Uveal autoantigen with coiled-coil domains and ankyrin repeats"/>
    <property type="match status" value="1"/>
</dbReference>
<dbReference type="Gene3D" id="1.25.40.20">
    <property type="entry name" value="Ankyrin repeat-containing domain"/>
    <property type="match status" value="2"/>
</dbReference>
<dbReference type="InterPro" id="IPR002110">
    <property type="entry name" value="Ankyrin_rpt"/>
</dbReference>
<dbReference type="InterPro" id="IPR036770">
    <property type="entry name" value="Ankyrin_rpt-contain_sf"/>
</dbReference>
<dbReference type="InterPro" id="IPR042420">
    <property type="entry name" value="RAI14/UACA"/>
</dbReference>
<dbReference type="PANTHER" id="PTHR24129">
    <property type="entry name" value="ANKYCORBIN"/>
    <property type="match status" value="1"/>
</dbReference>
<dbReference type="PANTHER" id="PTHR24129:SF1">
    <property type="entry name" value="UVEAL AUTOANTIGEN WITH COILED-COIL DOMAINS AND ANKYRIN REPEATS"/>
    <property type="match status" value="1"/>
</dbReference>
<dbReference type="Pfam" id="PF00023">
    <property type="entry name" value="Ank"/>
    <property type="match status" value="1"/>
</dbReference>
<dbReference type="Pfam" id="PF12796">
    <property type="entry name" value="Ank_2"/>
    <property type="match status" value="1"/>
</dbReference>
<dbReference type="Pfam" id="PF13637">
    <property type="entry name" value="Ank_4"/>
    <property type="match status" value="1"/>
</dbReference>
<dbReference type="SMART" id="SM00248">
    <property type="entry name" value="ANK"/>
    <property type="match status" value="6"/>
</dbReference>
<dbReference type="SUPFAM" id="SSF48403">
    <property type="entry name" value="Ankyrin repeat"/>
    <property type="match status" value="1"/>
</dbReference>
<dbReference type="PROSITE" id="PS50297">
    <property type="entry name" value="ANK_REP_REGION"/>
    <property type="match status" value="1"/>
</dbReference>
<dbReference type="PROSITE" id="PS50088">
    <property type="entry name" value="ANK_REPEAT"/>
    <property type="match status" value="5"/>
</dbReference>
<sequence length="1415" mass="162540">MPSSLLLATRNQILSMMNCWFSCAPKNRHAADWNKYDDRLMKAAERGDVEKVSSILAKKGINPGKLDVEGRSAFHVVASKGNLECLNAILIHGVDITTSDTAGRNALHLAAKYGHALCLQKLLQYNCPTEHADLQGRTALHDAAMADCPSSIQLLCDHGASVNAKDVDGRTPLVLATQMCRPAICQLLIDRGAEINSRDKQNRTALMLGCEYGCKDAVEVLLKNGADVSLLDALGHDSSYYARIGDNLDILTLLKTASENTNKGRELWKKGPSLQQRNLPYMLDEVNVKSSQREHRNIQELEIENEDLKDRLRKIQQEQRILLDKVNGLQLQLNEEVMVADDLESEKEKLKSLLVAKEKQHEESLRTIESLKNRFKYFESDHLGSGSHFSNRKEDMLLKQGQMYMTCTSPGVPAHMQSRSMLRPLELSLPNQTSYSENDLLKKELEAMRTFCESAKQDRLKLQNELAHKVAECKALGLECERIKEDSDEQIKQLEDALKDVQKRMYESEGKVKQMQTHFLALKEHLTSEAAIGNHRLMEELKDQLKDMKAKYEGASAEVGKLRNQIKQNELLVEQFRRDEGKLVEENKRLQKELSMCETERDKKGRRVAEVEGQVKELLAKLTLSVPTEKFESMKSLLSSEVNEKVKKIGETEREYEKSLTEIRQLRRELENCKAKLAQHVKPEEHEQLKSRLEQRAGELAKKVTELTSKNQVLQRDVEKVYLDNKLLNQQVHNLTSEIKSHYVPLQVSEEMKKSHDVTVEELKKQLLDVTQKCADKQLEMEKLLLENDSLSKNVSRLETVFVPPEKHQKEVTALKSSVADLKRQLLELNKKCGEDREKINALVSENTSLKKTLSNQYVPAKTHEEVKTALSGTLDKTNRELLDAKKKWEDLNQEFVKTKDENEILKRNLENTQSQIKAEYISLREHEEKMSAINQNMKSVQDNSAEILANYRKGQEEIVTLHAEIEAQKKELDTIQECIKLKYAPIISFEECERKFKATEKELKEQLSEQMQKYHVREEEAKKYKQENDKLKKEIFTLQKDLKDKNVLIENSHDMERALNRKAEELNKQLKDLLQKYSEIKTEKEKLVDDNARQTSELLAAQTLLQKQHVPLEQVETLKKSLNSTIEHLKEELKNKQKCYEKEQQTVAKLHQMLENQKNSSVPLGEHLRVKEAFEKEVGMIKASLREKEEESQNKTEEVSKLQSEVQDTKQALQKLETREVVDLSKYKATKSDLETQISNLNEKLANLNRKYEEACEEVLRAQRKQLSAKDEKELLHFSIEQEIKDQQERCDKSLTTITELQKRIQESAKQIEAKDNKITELLNDVERLKQALSGLSQLTSPSGSPSKRQSQLIDTLQHQVKSLQQQLADTDRQHQEVIAIYRTHLLSAAQGHMDEDVQAALLQIIQMRQGLVC</sequence>